<proteinExistence type="evidence at protein level"/>
<gene>
    <name evidence="4" type="primary">tpa</name>
    <name evidence="7" type="ORF">HMPREF0179_02713</name>
</gene>
<protein>
    <recommendedName>
        <fullName evidence="6">Taurine--pyruvate aminotransferase</fullName>
        <ecNumber evidence="3">2.6.1.77</ecNumber>
    </recommendedName>
    <alternativeName>
        <fullName evidence="4">Taurine:pyruvate aminotransferase</fullName>
    </alternativeName>
</protein>
<reference key="1">
    <citation type="submission" date="2013-04" db="EMBL/GenBank/DDBJ databases">
        <title>The Genome Sequence of Bilophila wadsworthia 3_1_6.</title>
        <authorList>
            <consortium name="The Broad Institute Genomics Platform"/>
            <person name="Earl A."/>
            <person name="Ward D."/>
            <person name="Feldgarden M."/>
            <person name="Gevers D."/>
            <person name="Sibley C."/>
            <person name="Strauss J."/>
            <person name="Allen-Vercoe E."/>
            <person name="Walker B."/>
            <person name="Young S."/>
            <person name="Zeng Q."/>
            <person name="Gargeya S."/>
            <person name="Fitzgerald M."/>
            <person name="Haas B."/>
            <person name="Abouelleil A."/>
            <person name="Allen A.W."/>
            <person name="Alvarado L."/>
            <person name="Arachchi H.M."/>
            <person name="Berlin A.M."/>
            <person name="Chapman S.B."/>
            <person name="Gainer-Dewar J."/>
            <person name="Goldberg J."/>
            <person name="Griggs A."/>
            <person name="Gujja S."/>
            <person name="Hansen M."/>
            <person name="Howarth C."/>
            <person name="Imamovic A."/>
            <person name="Ireland A."/>
            <person name="Larimer J."/>
            <person name="McCowan C."/>
            <person name="Murphy C."/>
            <person name="Pearson M."/>
            <person name="Poon T.W."/>
            <person name="Priest M."/>
            <person name="Roberts A."/>
            <person name="Saif S."/>
            <person name="Shea T."/>
            <person name="Sisk P."/>
            <person name="Sykes S."/>
            <person name="Wortman J."/>
            <person name="Nusbaum C."/>
            <person name="Birren B."/>
        </authorList>
    </citation>
    <scope>NUCLEOTIDE SEQUENCE [LARGE SCALE GENOMIC DNA]</scope>
    <source>
        <strain>3_1_6</strain>
    </source>
</reference>
<reference key="2">
    <citation type="journal article" date="2019" name="Proc. Natl. Acad. Sci. U.S.A.">
        <title>A glycyl radical enzyme enables hydrogen sulfide production by the human intestinal bacterium Bilophila wadsworthia.</title>
        <authorList>
            <person name="Peck S.C."/>
            <person name="Denger K."/>
            <person name="Burrichter A."/>
            <person name="Irwin S.M."/>
            <person name="Balskus E.P."/>
            <person name="Schleheck D."/>
        </authorList>
    </citation>
    <scope>FUNCTION</scope>
    <scope>CATALYTIC ACTIVITY</scope>
    <scope>COFACTOR</scope>
    <scope>INDUCTION BY TAURINE</scope>
    <scope>PATHWAY</scope>
    <source>
        <strain>3_1_6</strain>
    </source>
</reference>
<dbReference type="EC" id="2.6.1.77" evidence="3"/>
<dbReference type="EMBL" id="ADCP02000001">
    <property type="protein sequence ID" value="EFV43470.1"/>
    <property type="molecule type" value="Genomic_DNA"/>
</dbReference>
<dbReference type="RefSeq" id="WP_005028753.1">
    <property type="nucleotide sequence ID" value="NZ_KE150238.1"/>
</dbReference>
<dbReference type="SMR" id="E5Y945"/>
<dbReference type="STRING" id="563192.HMPREF0179_02713"/>
<dbReference type="GeneID" id="78084892"/>
<dbReference type="eggNOG" id="COG0161">
    <property type="taxonomic scope" value="Bacteria"/>
</dbReference>
<dbReference type="HOGENOM" id="CLU_016922_4_0_7"/>
<dbReference type="OrthoDB" id="9801834at2"/>
<dbReference type="UniPathway" id="UPA00338"/>
<dbReference type="Proteomes" id="UP000006034">
    <property type="component" value="Unassembled WGS sequence"/>
</dbReference>
<dbReference type="GO" id="GO:0005829">
    <property type="term" value="C:cytosol"/>
    <property type="evidence" value="ECO:0007669"/>
    <property type="project" value="TreeGrafter"/>
</dbReference>
<dbReference type="GO" id="GO:0030170">
    <property type="term" value="F:pyridoxal phosphate binding"/>
    <property type="evidence" value="ECO:0007669"/>
    <property type="project" value="InterPro"/>
</dbReference>
<dbReference type="GO" id="GO:0031299">
    <property type="term" value="F:taurine-pyruvate aminotransferase activity"/>
    <property type="evidence" value="ECO:0007669"/>
    <property type="project" value="UniProtKB-EC"/>
</dbReference>
<dbReference type="GO" id="GO:0046306">
    <property type="term" value="P:alkanesulfonate catabolic process"/>
    <property type="evidence" value="ECO:0007669"/>
    <property type="project" value="UniProtKB-UniPathway"/>
</dbReference>
<dbReference type="CDD" id="cd00610">
    <property type="entry name" value="OAT_like"/>
    <property type="match status" value="1"/>
</dbReference>
<dbReference type="FunFam" id="3.40.640.10:FF:000004">
    <property type="entry name" value="Acetylornithine aminotransferase"/>
    <property type="match status" value="1"/>
</dbReference>
<dbReference type="Gene3D" id="3.90.1150.10">
    <property type="entry name" value="Aspartate Aminotransferase, domain 1"/>
    <property type="match status" value="1"/>
</dbReference>
<dbReference type="Gene3D" id="3.40.640.10">
    <property type="entry name" value="Type I PLP-dependent aspartate aminotransferase-like (Major domain)"/>
    <property type="match status" value="1"/>
</dbReference>
<dbReference type="InterPro" id="IPR005814">
    <property type="entry name" value="Aminotrans_3"/>
</dbReference>
<dbReference type="InterPro" id="IPR049704">
    <property type="entry name" value="Aminotrans_3_PPA_site"/>
</dbReference>
<dbReference type="InterPro" id="IPR015424">
    <property type="entry name" value="PyrdxlP-dep_Trfase"/>
</dbReference>
<dbReference type="InterPro" id="IPR015421">
    <property type="entry name" value="PyrdxlP-dep_Trfase_major"/>
</dbReference>
<dbReference type="InterPro" id="IPR015422">
    <property type="entry name" value="PyrdxlP-dep_Trfase_small"/>
</dbReference>
<dbReference type="PANTHER" id="PTHR43094">
    <property type="entry name" value="AMINOTRANSFERASE"/>
    <property type="match status" value="1"/>
</dbReference>
<dbReference type="PANTHER" id="PTHR43094:SF1">
    <property type="entry name" value="AMINOTRANSFERASE CLASS-III"/>
    <property type="match status" value="1"/>
</dbReference>
<dbReference type="Pfam" id="PF00202">
    <property type="entry name" value="Aminotran_3"/>
    <property type="match status" value="1"/>
</dbReference>
<dbReference type="PIRSF" id="PIRSF000521">
    <property type="entry name" value="Transaminase_4ab_Lys_Orn"/>
    <property type="match status" value="1"/>
</dbReference>
<dbReference type="SUPFAM" id="SSF53383">
    <property type="entry name" value="PLP-dependent transferases"/>
    <property type="match status" value="1"/>
</dbReference>
<dbReference type="PROSITE" id="PS00600">
    <property type="entry name" value="AA_TRANSFER_CLASS_3"/>
    <property type="match status" value="1"/>
</dbReference>
<comment type="function">
    <text evidence="3">Involved in an anaerobic respiration pathway that converts the sulfonate taurine (2-aminoethanesulfonate) to ammonia, acetate and sulfide. Catalyzes the initial metabolic reaction of anaerobic taurine degradation, i.e. the transamination reaction between taurine and pyruvate leading to sulfoacetaldehyde and alanine.</text>
</comment>
<comment type="catalytic activity">
    <reaction evidence="3">
        <text>taurine + pyruvate = sulfoacetaldehyde + L-alanine</text>
        <dbReference type="Rhea" id="RHEA:10420"/>
        <dbReference type="ChEBI" id="CHEBI:15361"/>
        <dbReference type="ChEBI" id="CHEBI:57972"/>
        <dbReference type="ChEBI" id="CHEBI:58246"/>
        <dbReference type="ChEBI" id="CHEBI:507393"/>
        <dbReference type="EC" id="2.6.1.77"/>
    </reaction>
    <physiologicalReaction direction="left-to-right" evidence="3">
        <dbReference type="Rhea" id="RHEA:10421"/>
    </physiologicalReaction>
</comment>
<comment type="cofactor">
    <cofactor evidence="6">
        <name>pyridoxal 5'-phosphate</name>
        <dbReference type="ChEBI" id="CHEBI:597326"/>
    </cofactor>
</comment>
<comment type="pathway">
    <text evidence="3">Organosulfur degradation; alkanesulfonate degradation.</text>
</comment>
<comment type="subunit">
    <text evidence="2">Homotetramer.</text>
</comment>
<comment type="induction">
    <text evidence="3">Highly up-regulated in the presence of taurine.</text>
</comment>
<comment type="miscellaneous">
    <text evidence="6">Taurine is an abundant dietary and host-derived molecule whose metabolism to hydrogen sulfide (H2S) by members of the human gut microbiota has many prominent connections to host health and disease. The human gut bacterium and opportunistic pathogen Bilophila wadsworthia produces H2S when respiring sulfite (HSO3-) released from organosulfonate substrates such as taurine and isethionate.</text>
</comment>
<comment type="similarity">
    <text evidence="5">Belongs to the class-III pyridoxal-phosphate-dependent aminotransferase family.</text>
</comment>
<accession>E5Y945</accession>
<organism>
    <name type="scientific">Bilophila wadsworthia (strain 3_1_6)</name>
    <dbReference type="NCBI Taxonomy" id="563192"/>
    <lineage>
        <taxon>Bacteria</taxon>
        <taxon>Pseudomonadati</taxon>
        <taxon>Thermodesulfobacteriota</taxon>
        <taxon>Desulfovibrionia</taxon>
        <taxon>Desulfovibrionales</taxon>
        <taxon>Desulfovibrionaceae</taxon>
        <taxon>Bilophila</taxon>
    </lineage>
</organism>
<sequence length="456" mass="49721">MTYDKAELVALDKKYVWHHLTQHKNFEPAIYVKGEGMRITDIDGKTYLDAVSGGVWTVNVGYGRKEIVDAVAKQMMEMCYFANGIGNVPTIKFSEKLISKMPGMSRVYLSNSGSEANEKAFKIVRQIGQLKHGGKKTGILYRARDYHGTTIGTLSACGQFERKVQYGPFAPGFYEFPDCDVYRSKFGDCADLGVKMAKQLEEVILTVGPDELGAVIVEPMTAGGGILVPPAGYYETIREICDKYELLLIIDEVVCGLGRTGKWFGYQHFNVQPDIVTMAKGVASGYAPISCTVTTEKVFQDFVNDPADTDAYFRDISTFGGCTSGPAAALANIEIIERENLLENCTKMGDRLLEGLKGLMAKHPIIGDVRGKGLFAGIEIVKDRATKEPIAEAVANAMVGAAKQAGVLIGKTSRSFREFNNTLTLCPALIATEADIDEIVAGIDKAFTTVEQKFGL</sequence>
<feature type="chain" id="PRO_0000450940" description="Taurine--pyruvate aminotransferase">
    <location>
        <begin position="1"/>
        <end position="456"/>
    </location>
</feature>
<feature type="modified residue" description="N6-(pyridoxal phosphate)lysine" evidence="1">
    <location>
        <position position="280"/>
    </location>
</feature>
<evidence type="ECO:0000250" key="1">
    <source>
        <dbReference type="UniProtKB" id="P42588"/>
    </source>
</evidence>
<evidence type="ECO:0000250" key="2">
    <source>
        <dbReference type="UniProtKB" id="Q9APM5"/>
    </source>
</evidence>
<evidence type="ECO:0000269" key="3">
    <source>
    </source>
</evidence>
<evidence type="ECO:0000303" key="4">
    <source>
    </source>
</evidence>
<evidence type="ECO:0000305" key="5"/>
<evidence type="ECO:0000305" key="6">
    <source>
    </source>
</evidence>
<evidence type="ECO:0000312" key="7">
    <source>
        <dbReference type="EMBL" id="EFV43470.1"/>
    </source>
</evidence>
<keyword id="KW-0032">Aminotransferase</keyword>
<keyword id="KW-0663">Pyridoxal phosphate</keyword>
<keyword id="KW-0670">Pyruvate</keyword>
<keyword id="KW-1185">Reference proteome</keyword>
<keyword id="KW-0808">Transferase</keyword>
<name>TPA_BILW3</name>